<dbReference type="EMBL" id="AY651564">
    <property type="protein sequence ID" value="AAT73417.1"/>
    <property type="molecule type" value="Genomic_RNA"/>
</dbReference>
<dbReference type="SMR" id="Q6DP70"/>
<dbReference type="GO" id="GO:0030430">
    <property type="term" value="C:host cell cytoplasm"/>
    <property type="evidence" value="ECO:0007669"/>
    <property type="project" value="UniProtKB-SubCell"/>
</dbReference>
<dbReference type="GO" id="GO:0042025">
    <property type="term" value="C:host cell nucleus"/>
    <property type="evidence" value="ECO:0007669"/>
    <property type="project" value="UniProtKB-SubCell"/>
</dbReference>
<dbReference type="GO" id="GO:0030291">
    <property type="term" value="F:protein serine/threonine kinase inhibitor activity"/>
    <property type="evidence" value="ECO:0007669"/>
    <property type="project" value="UniProtKB-KW"/>
</dbReference>
<dbReference type="GO" id="GO:0003723">
    <property type="term" value="F:RNA binding"/>
    <property type="evidence" value="ECO:0007669"/>
    <property type="project" value="UniProtKB-KW"/>
</dbReference>
<dbReference type="GO" id="GO:0039540">
    <property type="term" value="P:symbiont-mediated suppression of host cytoplasmic pattern recognition receptor signaling pathway via inhibition of RIG-I activity"/>
    <property type="evidence" value="ECO:0007669"/>
    <property type="project" value="UniProtKB-KW"/>
</dbReference>
<dbReference type="GO" id="GO:0039657">
    <property type="term" value="P:symbiont-mediated suppression of host gene expression"/>
    <property type="evidence" value="ECO:0007669"/>
    <property type="project" value="UniProtKB-KW"/>
</dbReference>
<dbReference type="GO" id="GO:0039524">
    <property type="term" value="P:symbiont-mediated suppression of host mRNA processing"/>
    <property type="evidence" value="ECO:0007669"/>
    <property type="project" value="UniProtKB-KW"/>
</dbReference>
<dbReference type="GO" id="GO:0039580">
    <property type="term" value="P:symbiont-mediated suppression of host PKR/eIFalpha signaling"/>
    <property type="evidence" value="ECO:0007669"/>
    <property type="project" value="UniProtKB-KW"/>
</dbReference>
<dbReference type="GO" id="GO:0039502">
    <property type="term" value="P:symbiont-mediated suppression of host type I interferon-mediated signaling pathway"/>
    <property type="evidence" value="ECO:0007669"/>
    <property type="project" value="UniProtKB-KW"/>
</dbReference>
<dbReference type="FunFam" id="1.10.287.10:FF:000001">
    <property type="entry name" value="Non-structural protein 1"/>
    <property type="match status" value="1"/>
</dbReference>
<dbReference type="FunFam" id="3.30.420.330:FF:000001">
    <property type="entry name" value="Non-structural protein 1"/>
    <property type="match status" value="1"/>
</dbReference>
<dbReference type="Gene3D" id="3.30.420.330">
    <property type="entry name" value="Influenza virus non-structural protein, effector domain"/>
    <property type="match status" value="1"/>
</dbReference>
<dbReference type="Gene3D" id="1.10.287.10">
    <property type="entry name" value="S15/NS1, RNA-binding"/>
    <property type="match status" value="1"/>
</dbReference>
<dbReference type="HAMAP" id="MF_04066">
    <property type="entry name" value="INFV_NS1"/>
    <property type="match status" value="1"/>
</dbReference>
<dbReference type="InterPro" id="IPR004208">
    <property type="entry name" value="NS1"/>
</dbReference>
<dbReference type="InterPro" id="IPR000256">
    <property type="entry name" value="NS1A"/>
</dbReference>
<dbReference type="InterPro" id="IPR038064">
    <property type="entry name" value="NS1A_effect_dom-like_sf"/>
</dbReference>
<dbReference type="InterPro" id="IPR009068">
    <property type="entry name" value="uS15_NS1_RNA-bd_sf"/>
</dbReference>
<dbReference type="Pfam" id="PF00600">
    <property type="entry name" value="Flu_NS1"/>
    <property type="match status" value="1"/>
</dbReference>
<dbReference type="SUPFAM" id="SSF143021">
    <property type="entry name" value="Ns1 effector domain-like"/>
    <property type="match status" value="1"/>
</dbReference>
<dbReference type="SUPFAM" id="SSF47060">
    <property type="entry name" value="S15/NS1 RNA-binding domain"/>
    <property type="match status" value="1"/>
</dbReference>
<proteinExistence type="inferred from homology"/>
<sequence length="230" mass="26028">MDSNTVSSFQVDCFLWHVRKRFADQELGDAPFLDRLRRDQKSLRGRGSTLGLDIETATRAGKQIVERILEKESNEALKMTIASLPALRYLTDMTLEEMSRDWFMLMPKQKVAGSLCIRMDQAIMDKTIILKANFSVIFDRLETLILLRAFTEEGAIVGEISPLPSLPGHTDEDVKNAIGVLIGGLEWNDNTVRVSETLQRFAWRSSNEGGRPSLPPKQKRKMARTTESEV</sequence>
<feature type="chain" id="PRO_0000311747" description="Non-structural protein 1">
    <location>
        <begin position="1"/>
        <end position="230"/>
    </location>
</feature>
<feature type="region of interest" description="RNA-binding and homodimerization" evidence="1">
    <location>
        <begin position="1"/>
        <end position="73"/>
    </location>
</feature>
<feature type="region of interest" description="CPSF4-binding" evidence="1">
    <location>
        <begin position="180"/>
        <end position="215"/>
    </location>
</feature>
<feature type="region of interest" description="Disordered" evidence="2">
    <location>
        <begin position="205"/>
        <end position="230"/>
    </location>
</feature>
<feature type="region of interest" description="PABPN1-binding" evidence="1">
    <location>
        <begin position="223"/>
        <end position="230"/>
    </location>
</feature>
<feature type="short sequence motif" description="Nuclear localization signal" evidence="1">
    <location>
        <begin position="34"/>
        <end position="38"/>
    </location>
</feature>
<feature type="short sequence motif" description="Nuclear export signal" evidence="1">
    <location>
        <begin position="137"/>
        <end position="146"/>
    </location>
</feature>
<name>NS1_I02A1</name>
<comment type="function">
    <text evidence="1">Inhibits post-transcriptional processing of cellular pre-mRNA, by binding and inhibiting two cellular proteins that are required for the 3'-end processing of cellular pre-mRNAs: the 30 kDa cleavage and polyadenylation specificity factor/CPSF4 and the poly(A)-binding protein 2/PABPN1. In turn, unprocessed 3' end pre-mRNAs accumulate in the host nucleus and are no longer exported to the cytoplasm. Cellular protein synthesis is thereby shut off very early after virus infection. Viral protein synthesis is not affected by the inhibition of the cellular 3' end processing machinery because the poly(A) tails of viral mRNAs are produced by the viral polymerase through a stuttering mechanism. Prevents the establishment of the cellular antiviral state by inhibiting TRIM25-mediated RIGI ubiquitination, which normally triggers the antiviral transduction signal that leads to the activation of type I IFN genes by transcription factors IRF3 and IRF7. Also binds poly(A) and U6 snRNA. Inhibits the integrated stress response (ISR) in the infected cell by blocking dsRNA binding by EIF2AK2/PKR and further phosphorylation of EIF2S1/EIF-2ALPHA. Stress granule formation is thus inhibited, which allows protein synthesis and viral replication.</text>
</comment>
<comment type="subunit">
    <text evidence="1">Homodimer. Interacts with host TRIM25 (via coiled coil); this interaction specifically inhibits TRIM25 multimerization and TRIM25-mediated RIGI CARD ubiquitination. Interacts with human EIF2AK2/PKR, CPSF4, IVNS1ABP and PABPN1.</text>
</comment>
<comment type="subcellular location">
    <subcellularLocation>
        <location evidence="1">Host nucleus</location>
    </subcellularLocation>
    <subcellularLocation>
        <location evidence="1">Host cytoplasm</location>
    </subcellularLocation>
    <text evidence="1">In uninfected, transfected cells, NS1 is localized in the nucleus. Only in virus infected cells, the nuclear export signal is unveiled, presumably by a viral protein, and a fraction of NS1 is exported in the cytoplasm.</text>
</comment>
<comment type="alternative products">
    <event type="alternative splicing"/>
    <isoform>
        <id>Q6DP70-1</id>
        <name>NS1</name>
        <sequence type="displayed"/>
    </isoform>
    <isoform>
        <id>Q6DP71-1</id>
        <name>NEP</name>
        <name>NS2</name>
        <sequence type="external"/>
    </isoform>
</comment>
<comment type="domain">
    <text evidence="1">The dsRNA-binding region is required for suppression of RNA silencing.</text>
</comment>
<comment type="PTM">
    <text evidence="1">Upon interferon induction, ISGylated via host HERC5; this results in the impairment of NS1 interaction with RNA targets due to its inability to form homodimers and to interact with host EIF2AK2/PKR.</text>
</comment>
<comment type="similarity">
    <text evidence="1">Belongs to the influenza A viruses NS1 family.</text>
</comment>
<evidence type="ECO:0000255" key="1">
    <source>
        <dbReference type="HAMAP-Rule" id="MF_04066"/>
    </source>
</evidence>
<evidence type="ECO:0000256" key="2">
    <source>
        <dbReference type="SAM" id="MobiDB-lite"/>
    </source>
</evidence>
<accession>Q6DP70</accession>
<reference key="1">
    <citation type="journal article" date="2004" name="Nature">
        <title>Genesis of a highly pathogenic and potentially pandemic H5N1 influenza virus in eastern Asia.</title>
        <authorList>
            <person name="Li K.S."/>
            <person name="Guan Y."/>
            <person name="Wang J."/>
            <person name="Smith G.J.D."/>
            <person name="Xu K.M."/>
            <person name="Duan L."/>
            <person name="Rahardjo A.P."/>
            <person name="Puthavathana P."/>
            <person name="Buranathai C."/>
            <person name="Nguyen T.D."/>
            <person name="Estoepangestie A.T.S."/>
            <person name="Chaisingh A."/>
            <person name="Auewarakul P."/>
            <person name="Long H.T."/>
            <person name="Hanh N.T.H."/>
            <person name="Webby R.J."/>
            <person name="Poon L.L.M."/>
            <person name="Chen H."/>
            <person name="Shortridge K.F."/>
            <person name="Yuen K.Y."/>
            <person name="Webster R.G."/>
            <person name="Peiris J.S.M."/>
        </authorList>
    </citation>
    <scope>NUCLEOTIDE SEQUENCE [GENOMIC RNA]</scope>
</reference>
<keyword id="KW-0025">Alternative splicing</keyword>
<keyword id="KW-1262">Eukaryotic host gene expression shutoff by virus</keyword>
<keyword id="KW-1035">Host cytoplasm</keyword>
<keyword id="KW-1190">Host gene expression shutoff by virus</keyword>
<keyword id="KW-1192">Host mRNA suppression by virus</keyword>
<keyword id="KW-1048">Host nucleus</keyword>
<keyword id="KW-0945">Host-virus interaction</keyword>
<keyword id="KW-1090">Inhibition of host innate immune response by virus</keyword>
<keyword id="KW-1114">Inhibition of host interferon signaling pathway by virus</keyword>
<keyword id="KW-1102">Inhibition of host PKR by virus</keyword>
<keyword id="KW-1103">Inhibition of host pre-mRNA processing by virus</keyword>
<keyword id="KW-1088">Inhibition of host RIG-I by virus</keyword>
<keyword id="KW-1113">Inhibition of host RLR pathway by virus</keyword>
<keyword id="KW-0922">Interferon antiviral system evasion</keyword>
<keyword id="KW-0694">RNA-binding</keyword>
<keyword id="KW-0832">Ubl conjugation</keyword>
<keyword id="KW-0899">Viral immunoevasion</keyword>
<organismHost>
    <name type="scientific">Aves</name>
    <dbReference type="NCBI Taxonomy" id="8782"/>
</organismHost>
<organismHost>
    <name type="scientific">Felis catus</name>
    <name type="common">Cat</name>
    <name type="synonym">Felis silvestris catus</name>
    <dbReference type="NCBI Taxonomy" id="9685"/>
</organismHost>
<organismHost>
    <name type="scientific">Homo sapiens</name>
    <name type="common">Human</name>
    <dbReference type="NCBI Taxonomy" id="9606"/>
</organismHost>
<organismHost>
    <name type="scientific">Panthera pardus</name>
    <name type="common">Leopard</name>
    <name type="synonym">Felis pardus</name>
    <dbReference type="NCBI Taxonomy" id="9691"/>
</organismHost>
<organismHost>
    <name type="scientific">Panthera tigris</name>
    <name type="common">Tiger</name>
    <dbReference type="NCBI Taxonomy" id="9694"/>
</organismHost>
<organismHost>
    <name type="scientific">Sus scrofa</name>
    <name type="common">Pig</name>
    <dbReference type="NCBI Taxonomy" id="9823"/>
</organismHost>
<protein>
    <recommendedName>
        <fullName evidence="1">Non-structural protein 1</fullName>
        <shortName evidence="1">NS1</shortName>
    </recommendedName>
    <alternativeName>
        <fullName evidence="1">NS1A</fullName>
    </alternativeName>
</protein>
<organism>
    <name type="scientific">Influenza A virus (strain A/Guinea fowl/Hong Kong/38/2002 H5N1 genotype X0)</name>
    <dbReference type="NCBI Taxonomy" id="284208"/>
    <lineage>
        <taxon>Viruses</taxon>
        <taxon>Riboviria</taxon>
        <taxon>Orthornavirae</taxon>
        <taxon>Negarnaviricota</taxon>
        <taxon>Polyploviricotina</taxon>
        <taxon>Insthoviricetes</taxon>
        <taxon>Articulavirales</taxon>
        <taxon>Orthomyxoviridae</taxon>
        <taxon>Alphainfluenzavirus</taxon>
        <taxon>Alphainfluenzavirus influenzae</taxon>
        <taxon>Influenza A virus</taxon>
    </lineage>
</organism>
<gene>
    <name evidence="1" type="primary">NS</name>
</gene>